<comment type="function">
    <text evidence="3 5">Part of the ABC transporter complex GgtABCD involved in the uptake of the osmoprotective compounds glucosylglycerol (GG), sucrose and trehalose (PubMed:11081796). Responsible for the translocation of the substrate across the membrane (Probable).</text>
</comment>
<comment type="subunit">
    <text evidence="6">The complex is composed of two ATP-binding proteins (GgtA), two transmembrane proteins (GgtC and GgtD) and a solute-binding protein (GgtB).</text>
</comment>
<comment type="subcellular location">
    <subcellularLocation>
        <location evidence="5">Cell membrane</location>
        <topology evidence="1">Multi-pass membrane protein</topology>
    </subcellularLocation>
</comment>
<comment type="induction">
    <text evidence="3">Expression is very low in cells grown in basal medium but increases significantly after a salt shock.</text>
</comment>
<comment type="disruption phenotype">
    <text evidence="3">Inactivation of the gene results in loss of the ability to take up glucosylglycerol and sucrose, as well as to accumulate exogenous trehalose. Insertion causes leakage of glucosylglycerol from the cells into the medium.</text>
</comment>
<comment type="similarity">
    <text evidence="5">Belongs to the binding-protein-dependent transport system permease family.</text>
</comment>
<dbReference type="EMBL" id="BA000022">
    <property type="protein sequence ID" value="BAA10819.1"/>
    <property type="molecule type" value="Genomic_DNA"/>
</dbReference>
<dbReference type="PIR" id="S75972">
    <property type="entry name" value="S75972"/>
</dbReference>
<dbReference type="SMR" id="Q55473"/>
<dbReference type="FunCoup" id="Q55473">
    <property type="interactions" value="50"/>
</dbReference>
<dbReference type="STRING" id="1148.gene:10500323"/>
<dbReference type="TCDB" id="3.A.1.1.32">
    <property type="family name" value="the atp-binding cassette (abc) superfamily"/>
</dbReference>
<dbReference type="PaxDb" id="1148-1001332"/>
<dbReference type="EnsemblBacteria" id="BAA10819">
    <property type="protein sequence ID" value="BAA10819"/>
    <property type="gene ID" value="BAA10819"/>
</dbReference>
<dbReference type="KEGG" id="syn:slr0531"/>
<dbReference type="eggNOG" id="COG0395">
    <property type="taxonomic scope" value="Bacteria"/>
</dbReference>
<dbReference type="InParanoid" id="Q55473"/>
<dbReference type="PhylomeDB" id="Q55473"/>
<dbReference type="Proteomes" id="UP000001425">
    <property type="component" value="Chromosome"/>
</dbReference>
<dbReference type="GO" id="GO:0005886">
    <property type="term" value="C:plasma membrane"/>
    <property type="evidence" value="ECO:0007669"/>
    <property type="project" value="UniProtKB-SubCell"/>
</dbReference>
<dbReference type="GO" id="GO:0055085">
    <property type="term" value="P:transmembrane transport"/>
    <property type="evidence" value="ECO:0007669"/>
    <property type="project" value="InterPro"/>
</dbReference>
<dbReference type="CDD" id="cd06261">
    <property type="entry name" value="TM_PBP2"/>
    <property type="match status" value="1"/>
</dbReference>
<dbReference type="Gene3D" id="1.10.3720.10">
    <property type="entry name" value="MetI-like"/>
    <property type="match status" value="1"/>
</dbReference>
<dbReference type="InterPro" id="IPR000515">
    <property type="entry name" value="MetI-like"/>
</dbReference>
<dbReference type="InterPro" id="IPR035906">
    <property type="entry name" value="MetI-like_sf"/>
</dbReference>
<dbReference type="PANTHER" id="PTHR43744">
    <property type="entry name" value="ABC TRANSPORTER PERMEASE PROTEIN MG189-RELATED-RELATED"/>
    <property type="match status" value="1"/>
</dbReference>
<dbReference type="PANTHER" id="PTHR43744:SF4">
    <property type="entry name" value="OSMOPROTECTIVE COMPOUNDS UPTAKE PERMEASE PROTEIN GGTD"/>
    <property type="match status" value="1"/>
</dbReference>
<dbReference type="Pfam" id="PF00528">
    <property type="entry name" value="BPD_transp_1"/>
    <property type="match status" value="1"/>
</dbReference>
<dbReference type="SUPFAM" id="SSF161098">
    <property type="entry name" value="MetI-like"/>
    <property type="match status" value="1"/>
</dbReference>
<dbReference type="PROSITE" id="PS50928">
    <property type="entry name" value="ABC_TM1"/>
    <property type="match status" value="1"/>
</dbReference>
<accession>Q55473</accession>
<keyword id="KW-1003">Cell membrane</keyword>
<keyword id="KW-0472">Membrane</keyword>
<keyword id="KW-1185">Reference proteome</keyword>
<keyword id="KW-0762">Sugar transport</keyword>
<keyword id="KW-0812">Transmembrane</keyword>
<keyword id="KW-1133">Transmembrane helix</keyword>
<keyword id="KW-0813">Transport</keyword>
<feature type="chain" id="PRO_0000449364" description="Osmoprotective compounds uptake permease protein GgtD">
    <location>
        <begin position="1"/>
        <end position="298"/>
    </location>
</feature>
<feature type="transmembrane region" description="Helical" evidence="1">
    <location>
        <begin position="26"/>
        <end position="46"/>
    </location>
</feature>
<feature type="transmembrane region" description="Helical" evidence="1 2">
    <location>
        <begin position="97"/>
        <end position="117"/>
    </location>
</feature>
<feature type="transmembrane region" description="Helical" evidence="1 2">
    <location>
        <begin position="126"/>
        <end position="146"/>
    </location>
</feature>
<feature type="transmembrane region" description="Helical" evidence="1 2">
    <location>
        <begin position="158"/>
        <end position="178"/>
    </location>
</feature>
<feature type="transmembrane region" description="Helical" evidence="1 2">
    <location>
        <begin position="207"/>
        <end position="227"/>
    </location>
</feature>
<feature type="transmembrane region" description="Helical" evidence="1 2">
    <location>
        <begin position="231"/>
        <end position="251"/>
    </location>
</feature>
<feature type="transmembrane region" description="Helical" evidence="1 2">
    <location>
        <begin position="263"/>
        <end position="283"/>
    </location>
</feature>
<feature type="domain" description="ABC transmembrane type-1" evidence="2">
    <location>
        <begin position="91"/>
        <end position="283"/>
    </location>
</feature>
<name>GGTD_SYNY3</name>
<sequence length="298" mass="32829">MTKAVNKSNRTNNTNRKTEFWQKLPIHIAILTIAFIWTLPSLGLFISSLRPRGDMLSTGWWTVFWHPLEITQFYLGNYGDVLRSSGMGEAFLNSLTIAVPATVIPIAIATFAAYAFAWMTFPGRQLLFILVVCLLVVPLQTTLIPVLRVYAQLGLAGTFLGVWLAHTAYGLPLGIYLLRNYIGALPKDLIEAAAVDGASHLKIFTKLIVPLSMPAIASFAVFQFLWVWNDLLVALVYLGGTADVAPVTIQLSNLVGSRGQDWYLLTAGAFISMIVPLMVFFGLQRYFVRGILAGSVKS</sequence>
<protein>
    <recommendedName>
        <fullName evidence="5">Osmoprotective compounds uptake permease protein GgtD</fullName>
    </recommendedName>
</protein>
<evidence type="ECO:0000255" key="1"/>
<evidence type="ECO:0000255" key="2">
    <source>
        <dbReference type="PROSITE-ProRule" id="PRU00441"/>
    </source>
</evidence>
<evidence type="ECO:0000269" key="3">
    <source>
    </source>
</evidence>
<evidence type="ECO:0000303" key="4">
    <source>
    </source>
</evidence>
<evidence type="ECO:0000305" key="5"/>
<evidence type="ECO:0000305" key="6">
    <source>
    </source>
</evidence>
<evidence type="ECO:0000312" key="7">
    <source>
        <dbReference type="EMBL" id="BAA10819.1"/>
    </source>
</evidence>
<reference key="1">
    <citation type="journal article" date="1996" name="DNA Res.">
        <title>Sequence analysis of the genome of the unicellular cyanobacterium Synechocystis sp. strain PCC6803. II. Sequence determination of the entire genome and assignment of potential protein-coding regions.</title>
        <authorList>
            <person name="Kaneko T."/>
            <person name="Sato S."/>
            <person name="Kotani H."/>
            <person name="Tanaka A."/>
            <person name="Asamizu E."/>
            <person name="Nakamura Y."/>
            <person name="Miyajima N."/>
            <person name="Hirosawa M."/>
            <person name="Sugiura M."/>
            <person name="Sasamoto S."/>
            <person name="Kimura T."/>
            <person name="Hosouchi T."/>
            <person name="Matsuno A."/>
            <person name="Muraki A."/>
            <person name="Nakazaki N."/>
            <person name="Naruo K."/>
            <person name="Okumura S."/>
            <person name="Shimpo S."/>
            <person name="Takeuchi C."/>
            <person name="Wada T."/>
            <person name="Watanabe A."/>
            <person name="Yamada M."/>
            <person name="Yasuda M."/>
            <person name="Tabata S."/>
        </authorList>
    </citation>
    <scope>NUCLEOTIDE SEQUENCE [LARGE SCALE GENOMIC DNA]</scope>
    <source>
        <strain>ATCC 27184 / PCC 6803 / Kazusa</strain>
    </source>
</reference>
<reference key="2">
    <citation type="journal article" date="2000" name="Arch. Microbiol.">
        <title>Molecular analysis of the ggtBCD gene cluster of Synechocystis sp. strain PCC6803 encoding subunits of an ABC transporter for osmoprotective compounds.</title>
        <authorList>
            <person name="Mikkat S."/>
            <person name="Hagemann M."/>
        </authorList>
    </citation>
    <scope>FUNCTION</scope>
    <scope>SUBUNIT</scope>
    <scope>INDUCTION</scope>
    <scope>DISRUPTION PHENOTYPE</scope>
</reference>
<organism>
    <name type="scientific">Synechocystis sp. (strain ATCC 27184 / PCC 6803 / Kazusa)</name>
    <dbReference type="NCBI Taxonomy" id="1111708"/>
    <lineage>
        <taxon>Bacteria</taxon>
        <taxon>Bacillati</taxon>
        <taxon>Cyanobacteriota</taxon>
        <taxon>Cyanophyceae</taxon>
        <taxon>Synechococcales</taxon>
        <taxon>Merismopediaceae</taxon>
        <taxon>Synechocystis</taxon>
    </lineage>
</organism>
<proteinExistence type="evidence at protein level"/>
<gene>
    <name evidence="4" type="primary">ggtD</name>
    <name evidence="7" type="ordered locus">slr0531</name>
</gene>